<keyword id="KW-0963">Cytoplasm</keyword>
<keyword id="KW-0269">Exonuclease</keyword>
<keyword id="KW-0378">Hydrolase</keyword>
<keyword id="KW-0540">Nuclease</keyword>
<sequence length="76" mass="8516">MENKLSFEEAISQLEHLVSKLEQGDVPLEEAISYFKEGMELSKLCDEKLKDVQEQMAVILGEDGQLEPFTALGDEA</sequence>
<feature type="chain" id="PRO_1000079278" description="Exodeoxyribonuclease 7 small subunit">
    <location>
        <begin position="1"/>
        <end position="76"/>
    </location>
</feature>
<dbReference type="EC" id="3.1.11.6" evidence="1"/>
<dbReference type="EMBL" id="CP000764">
    <property type="protein sequence ID" value="ABS23105.1"/>
    <property type="molecule type" value="Genomic_DNA"/>
</dbReference>
<dbReference type="RefSeq" id="WP_012095332.1">
    <property type="nucleotide sequence ID" value="NC_009674.1"/>
</dbReference>
<dbReference type="SMR" id="A7GSJ7"/>
<dbReference type="STRING" id="315749.Bcer98_2872"/>
<dbReference type="GeneID" id="33898125"/>
<dbReference type="KEGG" id="bcy:Bcer98_2872"/>
<dbReference type="eggNOG" id="COG1722">
    <property type="taxonomic scope" value="Bacteria"/>
</dbReference>
<dbReference type="HOGENOM" id="CLU_145918_3_1_9"/>
<dbReference type="OrthoDB" id="9798666at2"/>
<dbReference type="Proteomes" id="UP000002300">
    <property type="component" value="Chromosome"/>
</dbReference>
<dbReference type="GO" id="GO:0005829">
    <property type="term" value="C:cytosol"/>
    <property type="evidence" value="ECO:0007669"/>
    <property type="project" value="TreeGrafter"/>
</dbReference>
<dbReference type="GO" id="GO:0009318">
    <property type="term" value="C:exodeoxyribonuclease VII complex"/>
    <property type="evidence" value="ECO:0007669"/>
    <property type="project" value="InterPro"/>
</dbReference>
<dbReference type="GO" id="GO:0008855">
    <property type="term" value="F:exodeoxyribonuclease VII activity"/>
    <property type="evidence" value="ECO:0007669"/>
    <property type="project" value="UniProtKB-UniRule"/>
</dbReference>
<dbReference type="GO" id="GO:0006308">
    <property type="term" value="P:DNA catabolic process"/>
    <property type="evidence" value="ECO:0007669"/>
    <property type="project" value="UniProtKB-UniRule"/>
</dbReference>
<dbReference type="FunFam" id="1.10.287.1040:FF:000002">
    <property type="entry name" value="Exodeoxyribonuclease 7 small subunit"/>
    <property type="match status" value="1"/>
</dbReference>
<dbReference type="Gene3D" id="1.10.287.1040">
    <property type="entry name" value="Exonuclease VII, small subunit"/>
    <property type="match status" value="1"/>
</dbReference>
<dbReference type="HAMAP" id="MF_00337">
    <property type="entry name" value="Exonuc_7_S"/>
    <property type="match status" value="1"/>
</dbReference>
<dbReference type="InterPro" id="IPR003761">
    <property type="entry name" value="Exonuc_VII_S"/>
</dbReference>
<dbReference type="InterPro" id="IPR037004">
    <property type="entry name" value="Exonuc_VII_ssu_sf"/>
</dbReference>
<dbReference type="NCBIfam" id="NF010666">
    <property type="entry name" value="PRK14063.1"/>
    <property type="match status" value="1"/>
</dbReference>
<dbReference type="NCBIfam" id="TIGR01280">
    <property type="entry name" value="xseB"/>
    <property type="match status" value="1"/>
</dbReference>
<dbReference type="PANTHER" id="PTHR34137">
    <property type="entry name" value="EXODEOXYRIBONUCLEASE 7 SMALL SUBUNIT"/>
    <property type="match status" value="1"/>
</dbReference>
<dbReference type="PANTHER" id="PTHR34137:SF1">
    <property type="entry name" value="EXODEOXYRIBONUCLEASE 7 SMALL SUBUNIT"/>
    <property type="match status" value="1"/>
</dbReference>
<dbReference type="Pfam" id="PF02609">
    <property type="entry name" value="Exonuc_VII_S"/>
    <property type="match status" value="1"/>
</dbReference>
<dbReference type="PIRSF" id="PIRSF006488">
    <property type="entry name" value="Exonuc_VII_S"/>
    <property type="match status" value="1"/>
</dbReference>
<dbReference type="SUPFAM" id="SSF116842">
    <property type="entry name" value="XseB-like"/>
    <property type="match status" value="1"/>
</dbReference>
<proteinExistence type="inferred from homology"/>
<protein>
    <recommendedName>
        <fullName evidence="1">Exodeoxyribonuclease 7 small subunit</fullName>
        <ecNumber evidence="1">3.1.11.6</ecNumber>
    </recommendedName>
    <alternativeName>
        <fullName evidence="1">Exodeoxyribonuclease VII small subunit</fullName>
        <shortName evidence="1">Exonuclease VII small subunit</shortName>
    </alternativeName>
</protein>
<organism>
    <name type="scientific">Bacillus cytotoxicus (strain DSM 22905 / CIP 110041 / 391-98 / NVH 391-98)</name>
    <dbReference type="NCBI Taxonomy" id="315749"/>
    <lineage>
        <taxon>Bacteria</taxon>
        <taxon>Bacillati</taxon>
        <taxon>Bacillota</taxon>
        <taxon>Bacilli</taxon>
        <taxon>Bacillales</taxon>
        <taxon>Bacillaceae</taxon>
        <taxon>Bacillus</taxon>
        <taxon>Bacillus cereus group</taxon>
    </lineage>
</organism>
<comment type="function">
    <text evidence="1">Bidirectionally degrades single-stranded DNA into large acid-insoluble oligonucleotides, which are then degraded further into small acid-soluble oligonucleotides.</text>
</comment>
<comment type="catalytic activity">
    <reaction evidence="1">
        <text>Exonucleolytic cleavage in either 5'- to 3'- or 3'- to 5'-direction to yield nucleoside 5'-phosphates.</text>
        <dbReference type="EC" id="3.1.11.6"/>
    </reaction>
</comment>
<comment type="subunit">
    <text evidence="1">Heterooligomer composed of large and small subunits.</text>
</comment>
<comment type="subcellular location">
    <subcellularLocation>
        <location evidence="1">Cytoplasm</location>
    </subcellularLocation>
</comment>
<comment type="similarity">
    <text evidence="1">Belongs to the XseB family.</text>
</comment>
<gene>
    <name evidence="1" type="primary">xseB</name>
    <name type="ordered locus">Bcer98_2872</name>
</gene>
<reference key="1">
    <citation type="journal article" date="2008" name="Chem. Biol. Interact.">
        <title>Extending the Bacillus cereus group genomics to putative food-borne pathogens of different toxicity.</title>
        <authorList>
            <person name="Lapidus A."/>
            <person name="Goltsman E."/>
            <person name="Auger S."/>
            <person name="Galleron N."/>
            <person name="Segurens B."/>
            <person name="Dossat C."/>
            <person name="Land M.L."/>
            <person name="Broussolle V."/>
            <person name="Brillard J."/>
            <person name="Guinebretiere M.-H."/>
            <person name="Sanchis V."/>
            <person name="Nguen-the C."/>
            <person name="Lereclus D."/>
            <person name="Richardson P."/>
            <person name="Wincker P."/>
            <person name="Weissenbach J."/>
            <person name="Ehrlich S.D."/>
            <person name="Sorokin A."/>
        </authorList>
    </citation>
    <scope>NUCLEOTIDE SEQUENCE [LARGE SCALE GENOMIC DNA]</scope>
    <source>
        <strain>DSM 22905 / CIP 110041 / 391-98 / NVH 391-98</strain>
    </source>
</reference>
<name>EX7S_BACCN</name>
<accession>A7GSJ7</accession>
<evidence type="ECO:0000255" key="1">
    <source>
        <dbReference type="HAMAP-Rule" id="MF_00337"/>
    </source>
</evidence>